<keyword id="KW-0342">GTP-binding</keyword>
<keyword id="KW-0472">Membrane</keyword>
<keyword id="KW-0496">Mitochondrion</keyword>
<keyword id="KW-0999">Mitochondrion inner membrane</keyword>
<keyword id="KW-0547">Nucleotide-binding</keyword>
<keyword id="KW-1185">Reference proteome</keyword>
<keyword id="KW-0809">Transit peptide</keyword>
<feature type="transit peptide" description="Mitochondrion" evidence="3">
    <location>
        <begin position="1"/>
        <end status="unknown"/>
    </location>
</feature>
<feature type="chain" id="PRO_0000280264" description="Mitochondrial GTPase 1">
    <location>
        <begin status="unknown"/>
        <end position="328"/>
    </location>
</feature>
<feature type="domain" description="CP-type G" evidence="4">
    <location>
        <begin position="23"/>
        <end position="211"/>
    </location>
</feature>
<feature type="binding site" evidence="1">
    <location>
        <begin position="70"/>
        <end position="73"/>
    </location>
    <ligand>
        <name>GTP</name>
        <dbReference type="ChEBI" id="CHEBI:37565"/>
    </ligand>
</feature>
<feature type="binding site" evidence="1">
    <location>
        <begin position="155"/>
        <end position="160"/>
    </location>
    <ligand>
        <name>GTP</name>
        <dbReference type="ChEBI" id="CHEBI:37565"/>
    </ligand>
</feature>
<feature type="binding site" evidence="1">
    <location>
        <position position="207"/>
    </location>
    <ligand>
        <name>GTP</name>
        <dbReference type="ChEBI" id="CHEBI:37565"/>
    </ligand>
</feature>
<proteinExistence type="inferred from homology"/>
<name>MTG1_SCHPO</name>
<protein>
    <recommendedName>
        <fullName>Mitochondrial GTPase 1</fullName>
    </recommendedName>
</protein>
<gene>
    <name type="primary">mtg1</name>
    <name type="ORF">SPBC25B2.04c</name>
</gene>
<reference key="1">
    <citation type="journal article" date="2002" name="Nature">
        <title>The genome sequence of Schizosaccharomyces pombe.</title>
        <authorList>
            <person name="Wood V."/>
            <person name="Gwilliam R."/>
            <person name="Rajandream M.A."/>
            <person name="Lyne M.H."/>
            <person name="Lyne R."/>
            <person name="Stewart A."/>
            <person name="Sgouros J.G."/>
            <person name="Peat N."/>
            <person name="Hayles J."/>
            <person name="Baker S.G."/>
            <person name="Basham D."/>
            <person name="Bowman S."/>
            <person name="Brooks K."/>
            <person name="Brown D."/>
            <person name="Brown S."/>
            <person name="Chillingworth T."/>
            <person name="Churcher C.M."/>
            <person name="Collins M."/>
            <person name="Connor R."/>
            <person name="Cronin A."/>
            <person name="Davis P."/>
            <person name="Feltwell T."/>
            <person name="Fraser A."/>
            <person name="Gentles S."/>
            <person name="Goble A."/>
            <person name="Hamlin N."/>
            <person name="Harris D.E."/>
            <person name="Hidalgo J."/>
            <person name="Hodgson G."/>
            <person name="Holroyd S."/>
            <person name="Hornsby T."/>
            <person name="Howarth S."/>
            <person name="Huckle E.J."/>
            <person name="Hunt S."/>
            <person name="Jagels K."/>
            <person name="James K.D."/>
            <person name="Jones L."/>
            <person name="Jones M."/>
            <person name="Leather S."/>
            <person name="McDonald S."/>
            <person name="McLean J."/>
            <person name="Mooney P."/>
            <person name="Moule S."/>
            <person name="Mungall K.L."/>
            <person name="Murphy L.D."/>
            <person name="Niblett D."/>
            <person name="Odell C."/>
            <person name="Oliver K."/>
            <person name="O'Neil S."/>
            <person name="Pearson D."/>
            <person name="Quail M.A."/>
            <person name="Rabbinowitsch E."/>
            <person name="Rutherford K.M."/>
            <person name="Rutter S."/>
            <person name="Saunders D."/>
            <person name="Seeger K."/>
            <person name="Sharp S."/>
            <person name="Skelton J."/>
            <person name="Simmonds M.N."/>
            <person name="Squares R."/>
            <person name="Squares S."/>
            <person name="Stevens K."/>
            <person name="Taylor K."/>
            <person name="Taylor R.G."/>
            <person name="Tivey A."/>
            <person name="Walsh S.V."/>
            <person name="Warren T."/>
            <person name="Whitehead S."/>
            <person name="Woodward J.R."/>
            <person name="Volckaert G."/>
            <person name="Aert R."/>
            <person name="Robben J."/>
            <person name="Grymonprez B."/>
            <person name="Weltjens I."/>
            <person name="Vanstreels E."/>
            <person name="Rieger M."/>
            <person name="Schaefer M."/>
            <person name="Mueller-Auer S."/>
            <person name="Gabel C."/>
            <person name="Fuchs M."/>
            <person name="Duesterhoeft A."/>
            <person name="Fritzc C."/>
            <person name="Holzer E."/>
            <person name="Moestl D."/>
            <person name="Hilbert H."/>
            <person name="Borzym K."/>
            <person name="Langer I."/>
            <person name="Beck A."/>
            <person name="Lehrach H."/>
            <person name="Reinhardt R."/>
            <person name="Pohl T.M."/>
            <person name="Eger P."/>
            <person name="Zimmermann W."/>
            <person name="Wedler H."/>
            <person name="Wambutt R."/>
            <person name="Purnelle B."/>
            <person name="Goffeau A."/>
            <person name="Cadieu E."/>
            <person name="Dreano S."/>
            <person name="Gloux S."/>
            <person name="Lelaure V."/>
            <person name="Mottier S."/>
            <person name="Galibert F."/>
            <person name="Aves S.J."/>
            <person name="Xiang Z."/>
            <person name="Hunt C."/>
            <person name="Moore K."/>
            <person name="Hurst S.M."/>
            <person name="Lucas M."/>
            <person name="Rochet M."/>
            <person name="Gaillardin C."/>
            <person name="Tallada V.A."/>
            <person name="Garzon A."/>
            <person name="Thode G."/>
            <person name="Daga R.R."/>
            <person name="Cruzado L."/>
            <person name="Jimenez J."/>
            <person name="Sanchez M."/>
            <person name="del Rey F."/>
            <person name="Benito J."/>
            <person name="Dominguez A."/>
            <person name="Revuelta J.L."/>
            <person name="Moreno S."/>
            <person name="Armstrong J."/>
            <person name="Forsburg S.L."/>
            <person name="Cerutti L."/>
            <person name="Lowe T."/>
            <person name="McCombie W.R."/>
            <person name="Paulsen I."/>
            <person name="Potashkin J."/>
            <person name="Shpakovski G.V."/>
            <person name="Ussery D."/>
            <person name="Barrell B.G."/>
            <person name="Nurse P."/>
        </authorList>
    </citation>
    <scope>NUCLEOTIDE SEQUENCE [LARGE SCALE GENOMIC DNA]</scope>
    <source>
        <strain>972 / ATCC 24843</strain>
    </source>
</reference>
<dbReference type="EMBL" id="CU329671">
    <property type="protein sequence ID" value="CAA21262.1"/>
    <property type="molecule type" value="Genomic_DNA"/>
</dbReference>
<dbReference type="PIR" id="T39980">
    <property type="entry name" value="T39980"/>
</dbReference>
<dbReference type="RefSeq" id="NP_596072.1">
    <property type="nucleotide sequence ID" value="NM_001021984.2"/>
</dbReference>
<dbReference type="SMR" id="O74776"/>
<dbReference type="BioGRID" id="276970">
    <property type="interactions" value="25"/>
</dbReference>
<dbReference type="FunCoup" id="O74776">
    <property type="interactions" value="477"/>
</dbReference>
<dbReference type="STRING" id="284812.O74776"/>
<dbReference type="PaxDb" id="4896-SPBC25B2.04c.1"/>
<dbReference type="EnsemblFungi" id="SPBC25B2.04c.1">
    <property type="protein sequence ID" value="SPBC25B2.04c.1:pep"/>
    <property type="gene ID" value="SPBC25B2.04c"/>
</dbReference>
<dbReference type="GeneID" id="2540442"/>
<dbReference type="KEGG" id="spo:2540442"/>
<dbReference type="PomBase" id="SPBC25B2.04c">
    <property type="gene designation" value="mtg1"/>
</dbReference>
<dbReference type="VEuPathDB" id="FungiDB:SPBC25B2.04c"/>
<dbReference type="eggNOG" id="KOG2485">
    <property type="taxonomic scope" value="Eukaryota"/>
</dbReference>
<dbReference type="HOGENOM" id="CLU_011106_0_1_1"/>
<dbReference type="InParanoid" id="O74776"/>
<dbReference type="OMA" id="GVLWPKF"/>
<dbReference type="PhylomeDB" id="O74776"/>
<dbReference type="PRO" id="PR:O74776"/>
<dbReference type="Proteomes" id="UP000002485">
    <property type="component" value="Chromosome II"/>
</dbReference>
<dbReference type="GO" id="GO:0005743">
    <property type="term" value="C:mitochondrial inner membrane"/>
    <property type="evidence" value="ECO:0007669"/>
    <property type="project" value="UniProtKB-SubCell"/>
</dbReference>
<dbReference type="GO" id="GO:0005759">
    <property type="term" value="C:mitochondrial matrix"/>
    <property type="evidence" value="ECO:0000305"/>
    <property type="project" value="PomBase"/>
</dbReference>
<dbReference type="GO" id="GO:0005739">
    <property type="term" value="C:mitochondrion"/>
    <property type="evidence" value="ECO:0007005"/>
    <property type="project" value="PomBase"/>
</dbReference>
<dbReference type="GO" id="GO:0005525">
    <property type="term" value="F:GTP binding"/>
    <property type="evidence" value="ECO:0007669"/>
    <property type="project" value="UniProtKB-KW"/>
</dbReference>
<dbReference type="GO" id="GO:0003924">
    <property type="term" value="F:GTPase activity"/>
    <property type="evidence" value="ECO:0000318"/>
    <property type="project" value="GO_Central"/>
</dbReference>
<dbReference type="GO" id="GO:0032543">
    <property type="term" value="P:mitochondrial translation"/>
    <property type="evidence" value="ECO:0000318"/>
    <property type="project" value="GO_Central"/>
</dbReference>
<dbReference type="CDD" id="cd01856">
    <property type="entry name" value="YlqF"/>
    <property type="match status" value="1"/>
</dbReference>
<dbReference type="Gene3D" id="1.10.1580.10">
    <property type="match status" value="1"/>
</dbReference>
<dbReference type="Gene3D" id="3.40.50.300">
    <property type="entry name" value="P-loop containing nucleotide triphosphate hydrolases"/>
    <property type="match status" value="1"/>
</dbReference>
<dbReference type="InterPro" id="IPR030378">
    <property type="entry name" value="G_CP_dom"/>
</dbReference>
<dbReference type="InterPro" id="IPR006073">
    <property type="entry name" value="GTP-bd"/>
</dbReference>
<dbReference type="InterPro" id="IPR023179">
    <property type="entry name" value="GTP-bd_ortho_bundle_sf"/>
</dbReference>
<dbReference type="InterPro" id="IPR016478">
    <property type="entry name" value="GTPase_MTG1"/>
</dbReference>
<dbReference type="InterPro" id="IPR027417">
    <property type="entry name" value="P-loop_NTPase"/>
</dbReference>
<dbReference type="PANTHER" id="PTHR45782">
    <property type="entry name" value="MITOCHONDRIAL RIBOSOME-ASSOCIATED GTPASE 1"/>
    <property type="match status" value="1"/>
</dbReference>
<dbReference type="PANTHER" id="PTHR45782:SF4">
    <property type="entry name" value="MITOCHONDRIAL RIBOSOME-ASSOCIATED GTPASE 1"/>
    <property type="match status" value="1"/>
</dbReference>
<dbReference type="Pfam" id="PF01926">
    <property type="entry name" value="MMR_HSR1"/>
    <property type="match status" value="1"/>
</dbReference>
<dbReference type="PIRSF" id="PIRSF006230">
    <property type="entry name" value="MG442"/>
    <property type="match status" value="1"/>
</dbReference>
<dbReference type="SUPFAM" id="SSF52540">
    <property type="entry name" value="P-loop containing nucleoside triphosphate hydrolases"/>
    <property type="match status" value="1"/>
</dbReference>
<dbReference type="PROSITE" id="PS51721">
    <property type="entry name" value="G_CP"/>
    <property type="match status" value="1"/>
</dbReference>
<sequence length="328" mass="37871">MAFVARQTFEYQMPSTWYPGHMNKTLKRLKNLTSSNDIFVEVRDARIPLTSRNYVMEDFLNKKNRIIVYNKCDLADTFHTKAKVSKHRIQNLAQQFQNVECWFKETSTPEKSAFITPYVSKAPYFAKELLRLIRTLVDQASANGRVYVYFVGMPNTGKSSILNSLRNVALRKSKSAIVGNYPGVTKRISEIVRLFNDMDVYMLDTPGIMTPSITKPEDMLKLSLVGCVKEGIVHPVTVVDYLLFHLNRIDPSLYSKWSLPTNDVDEFLQNTAYKARKLTKGGFDENFVSNYVIQQYRIGRLGRFQLDTIDKNELLIRLHNEQNKKNAK</sequence>
<evidence type="ECO:0000250" key="1"/>
<evidence type="ECO:0000250" key="2">
    <source>
        <dbReference type="UniProtKB" id="Q03151"/>
    </source>
</evidence>
<evidence type="ECO:0000255" key="3"/>
<evidence type="ECO:0000255" key="4">
    <source>
        <dbReference type="PROSITE-ProRule" id="PRU01058"/>
    </source>
</evidence>
<accession>O74776</accession>
<comment type="function">
    <text evidence="2">Mitochondrial GTPase involved in assembly of the large ribosomal subunit (By similarity). Plays a role in expression of the mitochondrial translational machinery (By similarity).</text>
</comment>
<comment type="subcellular location">
    <subcellularLocation>
        <location evidence="2">Mitochondrion inner membrane</location>
        <topology evidence="2">Peripheral membrane protein</topology>
    </subcellularLocation>
</comment>
<comment type="similarity">
    <text evidence="4">Belongs to the TRAFAC class YlqF/YawG GTPase family. MTG1 subfamily.</text>
</comment>
<organism>
    <name type="scientific">Schizosaccharomyces pombe (strain 972 / ATCC 24843)</name>
    <name type="common">Fission yeast</name>
    <dbReference type="NCBI Taxonomy" id="284812"/>
    <lineage>
        <taxon>Eukaryota</taxon>
        <taxon>Fungi</taxon>
        <taxon>Dikarya</taxon>
        <taxon>Ascomycota</taxon>
        <taxon>Taphrinomycotina</taxon>
        <taxon>Schizosaccharomycetes</taxon>
        <taxon>Schizosaccharomycetales</taxon>
        <taxon>Schizosaccharomycetaceae</taxon>
        <taxon>Schizosaccharomyces</taxon>
    </lineage>
</organism>